<gene>
    <name type="ordered locus">LBA0418</name>
</gene>
<name>Y418_LACAC</name>
<reference key="1">
    <citation type="journal article" date="2005" name="Proc. Natl. Acad. Sci. U.S.A.">
        <title>Complete genome sequence of the probiotic lactic acid bacterium Lactobacillus acidophilus NCFM.</title>
        <authorList>
            <person name="Altermann E."/>
            <person name="Russell W.M."/>
            <person name="Azcarate-Peril M.A."/>
            <person name="Barrangou R."/>
            <person name="Buck B.L."/>
            <person name="McAuliffe O."/>
            <person name="Souther N."/>
            <person name="Dobson A."/>
            <person name="Duong T."/>
            <person name="Callanan M."/>
            <person name="Lick S."/>
            <person name="Hamrick A."/>
            <person name="Cano R."/>
            <person name="Klaenhammer T.R."/>
        </authorList>
    </citation>
    <scope>NUCLEOTIDE SEQUENCE [LARGE SCALE GENOMIC DNA]</scope>
    <source>
        <strain>ATCC 700396 / NCK56 / N2 / NCFM</strain>
    </source>
</reference>
<proteinExistence type="inferred from homology"/>
<comment type="similarity">
    <text evidence="1">Belongs to the UPF0297 family.</text>
</comment>
<evidence type="ECO:0000255" key="1">
    <source>
        <dbReference type="HAMAP-Rule" id="MF_01507"/>
    </source>
</evidence>
<dbReference type="EMBL" id="CP000033">
    <property type="protein sequence ID" value="AAV42309.1"/>
    <property type="molecule type" value="Genomic_DNA"/>
</dbReference>
<dbReference type="RefSeq" id="WP_003549189.1">
    <property type="nucleotide sequence ID" value="NC_006814.3"/>
</dbReference>
<dbReference type="RefSeq" id="YP_193340.1">
    <property type="nucleotide sequence ID" value="NC_006814.3"/>
</dbReference>
<dbReference type="SMR" id="Q5FLW5"/>
<dbReference type="STRING" id="272621.LBA0418"/>
<dbReference type="KEGG" id="lac:LBA0418"/>
<dbReference type="PATRIC" id="fig|272621.13.peg.403"/>
<dbReference type="eggNOG" id="COG4472">
    <property type="taxonomic scope" value="Bacteria"/>
</dbReference>
<dbReference type="HOGENOM" id="CLU_162466_0_0_9"/>
<dbReference type="OrthoDB" id="9796303at2"/>
<dbReference type="BioCyc" id="LACI272621:G1G49-412-MONOMER"/>
<dbReference type="PRO" id="PR:Q5FLW5"/>
<dbReference type="Proteomes" id="UP000006381">
    <property type="component" value="Chromosome"/>
</dbReference>
<dbReference type="HAMAP" id="MF_01507">
    <property type="entry name" value="UPF0297"/>
    <property type="match status" value="1"/>
</dbReference>
<dbReference type="InterPro" id="IPR009309">
    <property type="entry name" value="IreB"/>
</dbReference>
<dbReference type="NCBIfam" id="NF003997">
    <property type="entry name" value="PRK05473.1"/>
    <property type="match status" value="1"/>
</dbReference>
<dbReference type="PANTHER" id="PTHR40067">
    <property type="entry name" value="UPF0297 PROTEIN YRZL"/>
    <property type="match status" value="1"/>
</dbReference>
<dbReference type="PANTHER" id="PTHR40067:SF1">
    <property type="entry name" value="UPF0297 PROTEIN YRZL"/>
    <property type="match status" value="1"/>
</dbReference>
<dbReference type="Pfam" id="PF06135">
    <property type="entry name" value="IreB"/>
    <property type="match status" value="1"/>
</dbReference>
<dbReference type="PIRSF" id="PIRSF037258">
    <property type="entry name" value="DUF965_bac"/>
    <property type="match status" value="1"/>
</dbReference>
<accession>Q5FLW5</accession>
<protein>
    <recommendedName>
        <fullName evidence="1">UPF0297 protein LBA0418</fullName>
    </recommendedName>
</protein>
<feature type="chain" id="PRO_0000216969" description="UPF0297 protein LBA0418">
    <location>
        <begin position="1"/>
        <end position="85"/>
    </location>
</feature>
<organism>
    <name type="scientific">Lactobacillus acidophilus (strain ATCC 700396 / NCK56 / N2 / NCFM)</name>
    <dbReference type="NCBI Taxonomy" id="272621"/>
    <lineage>
        <taxon>Bacteria</taxon>
        <taxon>Bacillati</taxon>
        <taxon>Bacillota</taxon>
        <taxon>Bacilli</taxon>
        <taxon>Lactobacillales</taxon>
        <taxon>Lactobacillaceae</taxon>
        <taxon>Lactobacillus</taxon>
    </lineage>
</organism>
<keyword id="KW-1185">Reference proteome</keyword>
<sequence>MSSLDKTMHFDFNQNKGKNVYDTLQDVYNALEEKGYNPINQIVGYLLSGDPAYIPRHNDARNLILKHERDEIIEELVKSYLGKNK</sequence>